<gene>
    <name evidence="1" type="primary">rpoB</name>
    <name type="ordered locus">Dtpsy_3246</name>
</gene>
<accession>B9MH47</accession>
<organism>
    <name type="scientific">Acidovorax ebreus (strain TPSY)</name>
    <name type="common">Diaphorobacter sp. (strain TPSY)</name>
    <dbReference type="NCBI Taxonomy" id="535289"/>
    <lineage>
        <taxon>Bacteria</taxon>
        <taxon>Pseudomonadati</taxon>
        <taxon>Pseudomonadota</taxon>
        <taxon>Betaproteobacteria</taxon>
        <taxon>Burkholderiales</taxon>
        <taxon>Comamonadaceae</taxon>
        <taxon>Diaphorobacter</taxon>
    </lineage>
</organism>
<evidence type="ECO:0000255" key="1">
    <source>
        <dbReference type="HAMAP-Rule" id="MF_01321"/>
    </source>
</evidence>
<reference key="1">
    <citation type="submission" date="2009-01" db="EMBL/GenBank/DDBJ databases">
        <title>Complete sequence of Diaphorobacter sp. TPSY.</title>
        <authorList>
            <consortium name="US DOE Joint Genome Institute"/>
            <person name="Lucas S."/>
            <person name="Copeland A."/>
            <person name="Lapidus A."/>
            <person name="Glavina del Rio T."/>
            <person name="Tice H."/>
            <person name="Bruce D."/>
            <person name="Goodwin L."/>
            <person name="Pitluck S."/>
            <person name="Chertkov O."/>
            <person name="Brettin T."/>
            <person name="Detter J.C."/>
            <person name="Han C."/>
            <person name="Larimer F."/>
            <person name="Land M."/>
            <person name="Hauser L."/>
            <person name="Kyrpides N."/>
            <person name="Mikhailova N."/>
            <person name="Coates J.D."/>
        </authorList>
    </citation>
    <scope>NUCLEOTIDE SEQUENCE [LARGE SCALE GENOMIC DNA]</scope>
    <source>
        <strain>TPSY</strain>
    </source>
</reference>
<name>RPOB_ACIET</name>
<keyword id="KW-0240">DNA-directed RNA polymerase</keyword>
<keyword id="KW-0548">Nucleotidyltransferase</keyword>
<keyword id="KW-1185">Reference proteome</keyword>
<keyword id="KW-0804">Transcription</keyword>
<keyword id="KW-0808">Transferase</keyword>
<protein>
    <recommendedName>
        <fullName evidence="1">DNA-directed RNA polymerase subunit beta</fullName>
        <shortName evidence="1">RNAP subunit beta</shortName>
        <ecNumber evidence="1">2.7.7.6</ecNumber>
    </recommendedName>
    <alternativeName>
        <fullName evidence="1">RNA polymerase subunit beta</fullName>
    </alternativeName>
    <alternativeName>
        <fullName evidence="1">Transcriptase subunit beta</fullName>
    </alternativeName>
</protein>
<sequence>MAQTSTYSYTERKRIRKSFGSRDSVLKVPYLLQMQRDAYTAFLQADTAPQKRSIEGLQAAFNSAFPIVSHNGFVEMKFVEYNLAKPAFDVRECQTRGLTFASAVRAKVQLIIYDRESSTSQSKVVKEVKEQEVYMGEVPLMTDKGSFIINGTERVIVSQLHRSPGVFFEHDKGKTHSSGKLLFSARIIPYRGSWLDFEFDPKDILYFRVDRRRKMPVTILLKAIGLNPESILANFFVNDNFRLMDSGAQLEFVPERLRGEVARFDITDKAGKVIVAKDKRVTARHTRELEQSGTTHISVPEDFLIGRVVARNIVDGDTGEILAKANEELTEALLKKLRAAGVQDLQVIYTNELDQGAYISQTLRIDETVDEFAARVAIYRMMRPGEPPTEDAVQALFQRLFYNPDTYDLSRVGRMKFNAKIGRDEATGPMVLSNDDILAVVKILVDLRNGKGEVDDIDHLGNRRVRCVGELAENQYRTGLARIEKAVKERLGQAEQEPLMPHDLINSKPISAALKEFFGASQLSQFMDQTNPLAEITHKRRVSALGPGGLTRERAGFEVRDVHVTHYGRVCPIETPEGPNIGLINSLALYARLNEYGFIETPYRRVVDGKVTMEIDYLSAIEEGKYIIAQANATLDAEGRLTGDLVSAREKGESTLVSADRVQYMDVSPAQIVSVAASLVPFLEHDDANRALMGANMSRQAVPVLRPEKPMVGTGIERVAAVDSGTVVTANRGGVVDYVDATRIVVRVNDDEAVAGEVGVDIYNLIKYQRSNQNTNIHQRPIVKKGDKLAKGDVIADGASTDLGEIAIGQNMLIAFMPWNGYNFEDSILISERVVAEDRYTSIHIEELVVMARDTKLGAEEITRDIPNLSEQQLNRLDESGIIYVGAEVQPGDTLVGKVTPKGETTLTPEEKLLRAIFGEKASDVKDTSLRVDQGSQGTVIDVQVFTREGIQRDKRAQQIIDDELKRFRLDLNDQLRIVEADAFDRIEKLLTGRVANGGPQKLAKGTKIDKAYLASVEKFHWFDIRPAEEEVATQLESIKNALEQTRHSFDLAFEEKRKKLTQGDELPAGVLKMVKVYLAVKRRLQPGDKMAGRHGNKGVVSKIVPVEDMPYMADGTPADIVLNPLGVPSRMNIGQVLEVHLGWAGKGMGQRIGDMLQREAKTAELRKFLEEIYNSRGRKEELSQLSDDEILAMARELTSGVPFASPVFDGASEEEIKDMLKLAYPDDLAQAKGLTETRTQAYLYDGRTGERFERPTTVGYMHYLKLHHLVDDKMHARSTGPYSLVTQQPLGGKAQFGGQRFGEMEVWALEAYGAAYVLQEMLTVKSDDVQGRTKVYENIVKGEHAIEAGMPESFNVLVKEIRSLGLDIELERS</sequence>
<comment type="function">
    <text evidence="1">DNA-dependent RNA polymerase catalyzes the transcription of DNA into RNA using the four ribonucleoside triphosphates as substrates.</text>
</comment>
<comment type="catalytic activity">
    <reaction evidence="1">
        <text>RNA(n) + a ribonucleoside 5'-triphosphate = RNA(n+1) + diphosphate</text>
        <dbReference type="Rhea" id="RHEA:21248"/>
        <dbReference type="Rhea" id="RHEA-COMP:14527"/>
        <dbReference type="Rhea" id="RHEA-COMP:17342"/>
        <dbReference type="ChEBI" id="CHEBI:33019"/>
        <dbReference type="ChEBI" id="CHEBI:61557"/>
        <dbReference type="ChEBI" id="CHEBI:140395"/>
        <dbReference type="EC" id="2.7.7.6"/>
    </reaction>
</comment>
<comment type="subunit">
    <text evidence="1">The RNAP catalytic core consists of 2 alpha, 1 beta, 1 beta' and 1 omega subunit. When a sigma factor is associated with the core the holoenzyme is formed, which can initiate transcription.</text>
</comment>
<comment type="similarity">
    <text evidence="1">Belongs to the RNA polymerase beta chain family.</text>
</comment>
<proteinExistence type="inferred from homology"/>
<feature type="chain" id="PRO_1000165804" description="DNA-directed RNA polymerase subunit beta">
    <location>
        <begin position="1"/>
        <end position="1374"/>
    </location>
</feature>
<dbReference type="EC" id="2.7.7.6" evidence="1"/>
<dbReference type="EMBL" id="CP001392">
    <property type="protein sequence ID" value="ACM34675.1"/>
    <property type="molecule type" value="Genomic_DNA"/>
</dbReference>
<dbReference type="RefSeq" id="WP_015914492.1">
    <property type="nucleotide sequence ID" value="NC_011992.1"/>
</dbReference>
<dbReference type="SMR" id="B9MH47"/>
<dbReference type="KEGG" id="dia:Dtpsy_3246"/>
<dbReference type="eggNOG" id="COG0085">
    <property type="taxonomic scope" value="Bacteria"/>
</dbReference>
<dbReference type="HOGENOM" id="CLU_000524_4_3_4"/>
<dbReference type="Proteomes" id="UP000000450">
    <property type="component" value="Chromosome"/>
</dbReference>
<dbReference type="GO" id="GO:0000428">
    <property type="term" value="C:DNA-directed RNA polymerase complex"/>
    <property type="evidence" value="ECO:0007669"/>
    <property type="project" value="UniProtKB-KW"/>
</dbReference>
<dbReference type="GO" id="GO:0003677">
    <property type="term" value="F:DNA binding"/>
    <property type="evidence" value="ECO:0007669"/>
    <property type="project" value="UniProtKB-UniRule"/>
</dbReference>
<dbReference type="GO" id="GO:0003899">
    <property type="term" value="F:DNA-directed RNA polymerase activity"/>
    <property type="evidence" value="ECO:0007669"/>
    <property type="project" value="UniProtKB-UniRule"/>
</dbReference>
<dbReference type="GO" id="GO:0032549">
    <property type="term" value="F:ribonucleoside binding"/>
    <property type="evidence" value="ECO:0007669"/>
    <property type="project" value="InterPro"/>
</dbReference>
<dbReference type="GO" id="GO:0006351">
    <property type="term" value="P:DNA-templated transcription"/>
    <property type="evidence" value="ECO:0007669"/>
    <property type="project" value="UniProtKB-UniRule"/>
</dbReference>
<dbReference type="CDD" id="cd00653">
    <property type="entry name" value="RNA_pol_B_RPB2"/>
    <property type="match status" value="1"/>
</dbReference>
<dbReference type="FunFam" id="2.40.50.100:FF:000006">
    <property type="entry name" value="DNA-directed RNA polymerase subunit beta"/>
    <property type="match status" value="1"/>
</dbReference>
<dbReference type="FunFam" id="3.90.1800.10:FF:000001">
    <property type="entry name" value="DNA-directed RNA polymerase subunit beta"/>
    <property type="match status" value="1"/>
</dbReference>
<dbReference type="Gene3D" id="2.40.50.100">
    <property type="match status" value="1"/>
</dbReference>
<dbReference type="Gene3D" id="2.40.50.150">
    <property type="match status" value="1"/>
</dbReference>
<dbReference type="Gene3D" id="3.90.1100.10">
    <property type="match status" value="2"/>
</dbReference>
<dbReference type="Gene3D" id="2.30.150.10">
    <property type="entry name" value="DNA-directed RNA polymerase, beta subunit, external 1 domain"/>
    <property type="match status" value="1"/>
</dbReference>
<dbReference type="Gene3D" id="2.40.270.10">
    <property type="entry name" value="DNA-directed RNA polymerase, subunit 2, domain 6"/>
    <property type="match status" value="2"/>
</dbReference>
<dbReference type="Gene3D" id="3.90.1800.10">
    <property type="entry name" value="RNA polymerase alpha subunit dimerisation domain"/>
    <property type="match status" value="1"/>
</dbReference>
<dbReference type="Gene3D" id="3.90.1110.10">
    <property type="entry name" value="RNA polymerase Rpb2, domain 2"/>
    <property type="match status" value="2"/>
</dbReference>
<dbReference type="HAMAP" id="MF_01321">
    <property type="entry name" value="RNApol_bact_RpoB"/>
    <property type="match status" value="1"/>
</dbReference>
<dbReference type="InterPro" id="IPR042107">
    <property type="entry name" value="DNA-dir_RNA_pol_bsu_ext_1_sf"/>
</dbReference>
<dbReference type="InterPro" id="IPR019462">
    <property type="entry name" value="DNA-dir_RNA_pol_bsu_external_1"/>
</dbReference>
<dbReference type="InterPro" id="IPR015712">
    <property type="entry name" value="DNA-dir_RNA_pol_su2"/>
</dbReference>
<dbReference type="InterPro" id="IPR007120">
    <property type="entry name" value="DNA-dir_RNAP_su2_dom"/>
</dbReference>
<dbReference type="InterPro" id="IPR037033">
    <property type="entry name" value="DNA-dir_RNAP_su2_hyb_sf"/>
</dbReference>
<dbReference type="InterPro" id="IPR010243">
    <property type="entry name" value="RNA_pol_bsu_bac"/>
</dbReference>
<dbReference type="InterPro" id="IPR007121">
    <property type="entry name" value="RNA_pol_bsu_CS"/>
</dbReference>
<dbReference type="InterPro" id="IPR007644">
    <property type="entry name" value="RNA_pol_bsu_protrusion"/>
</dbReference>
<dbReference type="InterPro" id="IPR007642">
    <property type="entry name" value="RNA_pol_Rpb2_2"/>
</dbReference>
<dbReference type="InterPro" id="IPR037034">
    <property type="entry name" value="RNA_pol_Rpb2_2_sf"/>
</dbReference>
<dbReference type="InterPro" id="IPR007645">
    <property type="entry name" value="RNA_pol_Rpb2_3"/>
</dbReference>
<dbReference type="InterPro" id="IPR007641">
    <property type="entry name" value="RNA_pol_Rpb2_7"/>
</dbReference>
<dbReference type="InterPro" id="IPR014724">
    <property type="entry name" value="RNA_pol_RPB2_OB-fold"/>
</dbReference>
<dbReference type="NCBIfam" id="NF001616">
    <property type="entry name" value="PRK00405.1"/>
    <property type="match status" value="1"/>
</dbReference>
<dbReference type="NCBIfam" id="TIGR02013">
    <property type="entry name" value="rpoB"/>
    <property type="match status" value="1"/>
</dbReference>
<dbReference type="PANTHER" id="PTHR20856">
    <property type="entry name" value="DNA-DIRECTED RNA POLYMERASE I SUBUNIT 2"/>
    <property type="match status" value="1"/>
</dbReference>
<dbReference type="Pfam" id="PF04563">
    <property type="entry name" value="RNA_pol_Rpb2_1"/>
    <property type="match status" value="1"/>
</dbReference>
<dbReference type="Pfam" id="PF04561">
    <property type="entry name" value="RNA_pol_Rpb2_2"/>
    <property type="match status" value="2"/>
</dbReference>
<dbReference type="Pfam" id="PF04565">
    <property type="entry name" value="RNA_pol_Rpb2_3"/>
    <property type="match status" value="1"/>
</dbReference>
<dbReference type="Pfam" id="PF10385">
    <property type="entry name" value="RNA_pol_Rpb2_45"/>
    <property type="match status" value="1"/>
</dbReference>
<dbReference type="Pfam" id="PF00562">
    <property type="entry name" value="RNA_pol_Rpb2_6"/>
    <property type="match status" value="1"/>
</dbReference>
<dbReference type="Pfam" id="PF04560">
    <property type="entry name" value="RNA_pol_Rpb2_7"/>
    <property type="match status" value="1"/>
</dbReference>
<dbReference type="SUPFAM" id="SSF64484">
    <property type="entry name" value="beta and beta-prime subunits of DNA dependent RNA-polymerase"/>
    <property type="match status" value="1"/>
</dbReference>
<dbReference type="PROSITE" id="PS01166">
    <property type="entry name" value="RNA_POL_BETA"/>
    <property type="match status" value="1"/>
</dbReference>